<name>CLPS_BORPA</name>
<protein>
    <recommendedName>
        <fullName evidence="1">ATP-dependent Clp protease adapter protein ClpS</fullName>
    </recommendedName>
</protein>
<dbReference type="EMBL" id="BX640430">
    <property type="protein sequence ID" value="CAE37866.1"/>
    <property type="molecule type" value="Genomic_DNA"/>
</dbReference>
<dbReference type="RefSeq" id="WP_003812873.1">
    <property type="nucleotide sequence ID" value="NC_002928.3"/>
</dbReference>
<dbReference type="SMR" id="Q7W7E8"/>
<dbReference type="GeneID" id="93204359"/>
<dbReference type="KEGG" id="bpa:BPP2572"/>
<dbReference type="HOGENOM" id="CLU_134358_2_1_4"/>
<dbReference type="Proteomes" id="UP000001421">
    <property type="component" value="Chromosome"/>
</dbReference>
<dbReference type="GO" id="GO:0030163">
    <property type="term" value="P:protein catabolic process"/>
    <property type="evidence" value="ECO:0007669"/>
    <property type="project" value="InterPro"/>
</dbReference>
<dbReference type="GO" id="GO:0006508">
    <property type="term" value="P:proteolysis"/>
    <property type="evidence" value="ECO:0007669"/>
    <property type="project" value="UniProtKB-UniRule"/>
</dbReference>
<dbReference type="FunFam" id="3.30.1390.10:FF:000002">
    <property type="entry name" value="ATP-dependent Clp protease adapter protein ClpS"/>
    <property type="match status" value="1"/>
</dbReference>
<dbReference type="Gene3D" id="3.30.1390.10">
    <property type="match status" value="1"/>
</dbReference>
<dbReference type="HAMAP" id="MF_00302">
    <property type="entry name" value="ClpS"/>
    <property type="match status" value="1"/>
</dbReference>
<dbReference type="InterPro" id="IPR022935">
    <property type="entry name" value="ClpS"/>
</dbReference>
<dbReference type="InterPro" id="IPR003769">
    <property type="entry name" value="ClpS_core"/>
</dbReference>
<dbReference type="InterPro" id="IPR014719">
    <property type="entry name" value="Ribosomal_bL12_C/ClpS-like"/>
</dbReference>
<dbReference type="NCBIfam" id="NF000672">
    <property type="entry name" value="PRK00033.1-5"/>
    <property type="match status" value="1"/>
</dbReference>
<dbReference type="PANTHER" id="PTHR33473:SF19">
    <property type="entry name" value="ATP-DEPENDENT CLP PROTEASE ADAPTER PROTEIN CLPS"/>
    <property type="match status" value="1"/>
</dbReference>
<dbReference type="PANTHER" id="PTHR33473">
    <property type="entry name" value="ATP-DEPENDENT CLP PROTEASE ADAPTER PROTEIN CLPS1, CHLOROPLASTIC"/>
    <property type="match status" value="1"/>
</dbReference>
<dbReference type="Pfam" id="PF02617">
    <property type="entry name" value="ClpS"/>
    <property type="match status" value="1"/>
</dbReference>
<dbReference type="SUPFAM" id="SSF54736">
    <property type="entry name" value="ClpS-like"/>
    <property type="match status" value="1"/>
</dbReference>
<sequence>MSSTLDTQHDVVVEKQPARTAPPPMYQVVLLNDDYTPMEFVVKVLQKFFGKNSEDATRIMLQVHHEGRAVCGVYPRDLAATRIAQVSQYARARQHPLQCIMEPA</sequence>
<accession>Q7W7E8</accession>
<evidence type="ECO:0000255" key="1">
    <source>
        <dbReference type="HAMAP-Rule" id="MF_00302"/>
    </source>
</evidence>
<proteinExistence type="inferred from homology"/>
<organism>
    <name type="scientific">Bordetella parapertussis (strain 12822 / ATCC BAA-587 / NCTC 13253)</name>
    <dbReference type="NCBI Taxonomy" id="257311"/>
    <lineage>
        <taxon>Bacteria</taxon>
        <taxon>Pseudomonadati</taxon>
        <taxon>Pseudomonadota</taxon>
        <taxon>Betaproteobacteria</taxon>
        <taxon>Burkholderiales</taxon>
        <taxon>Alcaligenaceae</taxon>
        <taxon>Bordetella</taxon>
    </lineage>
</organism>
<reference key="1">
    <citation type="journal article" date="2003" name="Nat. Genet.">
        <title>Comparative analysis of the genome sequences of Bordetella pertussis, Bordetella parapertussis and Bordetella bronchiseptica.</title>
        <authorList>
            <person name="Parkhill J."/>
            <person name="Sebaihia M."/>
            <person name="Preston A."/>
            <person name="Murphy L.D."/>
            <person name="Thomson N.R."/>
            <person name="Harris D.E."/>
            <person name="Holden M.T.G."/>
            <person name="Churcher C.M."/>
            <person name="Bentley S.D."/>
            <person name="Mungall K.L."/>
            <person name="Cerdeno-Tarraga A.-M."/>
            <person name="Temple L."/>
            <person name="James K.D."/>
            <person name="Harris B."/>
            <person name="Quail M.A."/>
            <person name="Achtman M."/>
            <person name="Atkin R."/>
            <person name="Baker S."/>
            <person name="Basham D."/>
            <person name="Bason N."/>
            <person name="Cherevach I."/>
            <person name="Chillingworth T."/>
            <person name="Collins M."/>
            <person name="Cronin A."/>
            <person name="Davis P."/>
            <person name="Doggett J."/>
            <person name="Feltwell T."/>
            <person name="Goble A."/>
            <person name="Hamlin N."/>
            <person name="Hauser H."/>
            <person name="Holroyd S."/>
            <person name="Jagels K."/>
            <person name="Leather S."/>
            <person name="Moule S."/>
            <person name="Norberczak H."/>
            <person name="O'Neil S."/>
            <person name="Ormond D."/>
            <person name="Price C."/>
            <person name="Rabbinowitsch E."/>
            <person name="Rutter S."/>
            <person name="Sanders M."/>
            <person name="Saunders D."/>
            <person name="Seeger K."/>
            <person name="Sharp S."/>
            <person name="Simmonds M."/>
            <person name="Skelton J."/>
            <person name="Squares R."/>
            <person name="Squares S."/>
            <person name="Stevens K."/>
            <person name="Unwin L."/>
            <person name="Whitehead S."/>
            <person name="Barrell B.G."/>
            <person name="Maskell D.J."/>
        </authorList>
    </citation>
    <scope>NUCLEOTIDE SEQUENCE [LARGE SCALE GENOMIC DNA]</scope>
    <source>
        <strain>12822 / ATCC BAA-587 / NCTC 13253</strain>
    </source>
</reference>
<gene>
    <name evidence="1" type="primary">clpS</name>
    <name type="ordered locus">BPP2572</name>
</gene>
<comment type="function">
    <text evidence="1">Involved in the modulation of the specificity of the ClpAP-mediated ATP-dependent protein degradation.</text>
</comment>
<comment type="subunit">
    <text evidence="1">Binds to the N-terminal domain of the chaperone ClpA.</text>
</comment>
<comment type="similarity">
    <text evidence="1">Belongs to the ClpS family.</text>
</comment>
<feature type="chain" id="PRO_0000215688" description="ATP-dependent Clp protease adapter protein ClpS">
    <location>
        <begin position="1"/>
        <end position="104"/>
    </location>
</feature>